<dbReference type="EC" id="1.14.13.-" evidence="1"/>
<dbReference type="EC" id="1.14.13.113" evidence="1"/>
<dbReference type="EMBL" id="AE008922">
    <property type="protein sequence ID" value="AAM39598.1"/>
    <property type="molecule type" value="Genomic_DNA"/>
</dbReference>
<dbReference type="RefSeq" id="NP_635674.1">
    <property type="nucleotide sequence ID" value="NC_003902.1"/>
</dbReference>
<dbReference type="RefSeq" id="WP_011035534.1">
    <property type="nucleotide sequence ID" value="NC_003902.1"/>
</dbReference>
<dbReference type="SMR" id="Q8PDQ6"/>
<dbReference type="STRING" id="190485.XCC0279"/>
<dbReference type="DNASU" id="999991"/>
<dbReference type="EnsemblBacteria" id="AAM39598">
    <property type="protein sequence ID" value="AAM39598"/>
    <property type="gene ID" value="XCC0279"/>
</dbReference>
<dbReference type="KEGG" id="xcc:XCC0279"/>
<dbReference type="PATRIC" id="fig|190485.4.peg.310"/>
<dbReference type="eggNOG" id="COG2072">
    <property type="taxonomic scope" value="Bacteria"/>
</dbReference>
<dbReference type="HOGENOM" id="CLU_044076_0_0_6"/>
<dbReference type="OrthoDB" id="8671611at2"/>
<dbReference type="BioCyc" id="MetaCyc:MONOMER-18267"/>
<dbReference type="BRENDA" id="1.14.13.113">
    <property type="organism ID" value="6708"/>
</dbReference>
<dbReference type="UniPathway" id="UPA00394"/>
<dbReference type="Proteomes" id="UP000001010">
    <property type="component" value="Chromosome"/>
</dbReference>
<dbReference type="GO" id="GO:0071949">
    <property type="term" value="F:FAD binding"/>
    <property type="evidence" value="ECO:0000314"/>
    <property type="project" value="UniProtKB"/>
</dbReference>
<dbReference type="GO" id="GO:0102099">
    <property type="term" value="F:FAD-dependent urate hydroxylase activity"/>
    <property type="evidence" value="ECO:0007669"/>
    <property type="project" value="UniProtKB-EC"/>
</dbReference>
<dbReference type="GO" id="GO:0050660">
    <property type="term" value="F:flavin adenine dinucleotide binding"/>
    <property type="evidence" value="ECO:0000318"/>
    <property type="project" value="GO_Central"/>
</dbReference>
<dbReference type="GO" id="GO:0004497">
    <property type="term" value="F:monooxygenase activity"/>
    <property type="evidence" value="ECO:0000318"/>
    <property type="project" value="GO_Central"/>
</dbReference>
<dbReference type="GO" id="GO:0070404">
    <property type="term" value="F:NADH binding"/>
    <property type="evidence" value="ECO:0000314"/>
    <property type="project" value="UniProtKB"/>
</dbReference>
<dbReference type="GO" id="GO:0070402">
    <property type="term" value="F:NADPH binding"/>
    <property type="evidence" value="ECO:0000314"/>
    <property type="project" value="UniProtKB"/>
</dbReference>
<dbReference type="GO" id="GO:0016709">
    <property type="term" value="F:oxidoreductase activity, acting on paired donors, with incorporation or reduction of molecular oxygen, NAD(P)H as one donor, and incorporation of one atom of oxygen"/>
    <property type="evidence" value="ECO:0000314"/>
    <property type="project" value="UniProtKB"/>
</dbReference>
<dbReference type="GO" id="GO:0006144">
    <property type="term" value="P:purine nucleobase metabolic process"/>
    <property type="evidence" value="ECO:0007669"/>
    <property type="project" value="UniProtKB-KW"/>
</dbReference>
<dbReference type="GO" id="GO:0019628">
    <property type="term" value="P:urate catabolic process"/>
    <property type="evidence" value="ECO:0000316"/>
    <property type="project" value="UniProtKB"/>
</dbReference>
<dbReference type="Gene3D" id="3.50.50.60">
    <property type="entry name" value="FAD/NAD(P)-binding domain"/>
    <property type="match status" value="1"/>
</dbReference>
<dbReference type="InterPro" id="IPR050982">
    <property type="entry name" value="Auxin_biosynth/cation_transpt"/>
</dbReference>
<dbReference type="InterPro" id="IPR036188">
    <property type="entry name" value="FAD/NAD-bd_sf"/>
</dbReference>
<dbReference type="InterPro" id="IPR038732">
    <property type="entry name" value="HpyO/CreE_NAD-binding"/>
</dbReference>
<dbReference type="PANTHER" id="PTHR43539:SF91">
    <property type="entry name" value="FAD-DEPENDENT URATE HYDROXYLASE"/>
    <property type="match status" value="1"/>
</dbReference>
<dbReference type="PANTHER" id="PTHR43539">
    <property type="entry name" value="FLAVIN-BINDING MONOOXYGENASE-LIKE PROTEIN (AFU_ORTHOLOGUE AFUA_4G09220)"/>
    <property type="match status" value="1"/>
</dbReference>
<dbReference type="Pfam" id="PF13454">
    <property type="entry name" value="NAD_binding_9"/>
    <property type="match status" value="1"/>
</dbReference>
<dbReference type="PRINTS" id="PR00368">
    <property type="entry name" value="FADPNR"/>
</dbReference>
<dbReference type="SUPFAM" id="SSF51905">
    <property type="entry name" value="FAD/NAD(P)-binding domain"/>
    <property type="match status" value="1"/>
</dbReference>
<proteinExistence type="evidence at protein level"/>
<gene>
    <name evidence="2" type="primary">hpyO</name>
    <name evidence="4" type="ordered locus">XCC0279</name>
</gene>
<name>HPYO_XANCP</name>
<reference key="1">
    <citation type="journal article" date="2002" name="Nature">
        <title>Comparison of the genomes of two Xanthomonas pathogens with differing host specificities.</title>
        <authorList>
            <person name="da Silva A.C.R."/>
            <person name="Ferro J.A."/>
            <person name="Reinach F.C."/>
            <person name="Farah C.S."/>
            <person name="Furlan L.R."/>
            <person name="Quaggio R.B."/>
            <person name="Monteiro-Vitorello C.B."/>
            <person name="Van Sluys M.A."/>
            <person name="Almeida N.F. Jr."/>
            <person name="Alves L.M.C."/>
            <person name="do Amaral A.M."/>
            <person name="Bertolini M.C."/>
            <person name="Camargo L.E.A."/>
            <person name="Camarotte G."/>
            <person name="Cannavan F."/>
            <person name="Cardozo J."/>
            <person name="Chambergo F."/>
            <person name="Ciapina L.P."/>
            <person name="Cicarelli R.M.B."/>
            <person name="Coutinho L.L."/>
            <person name="Cursino-Santos J.R."/>
            <person name="El-Dorry H."/>
            <person name="Faria J.B."/>
            <person name="Ferreira A.J.S."/>
            <person name="Ferreira R.C.C."/>
            <person name="Ferro M.I.T."/>
            <person name="Formighieri E.F."/>
            <person name="Franco M.C."/>
            <person name="Greggio C.C."/>
            <person name="Gruber A."/>
            <person name="Katsuyama A.M."/>
            <person name="Kishi L.T."/>
            <person name="Leite R.P."/>
            <person name="Lemos E.G.M."/>
            <person name="Lemos M.V.F."/>
            <person name="Locali E.C."/>
            <person name="Machado M.A."/>
            <person name="Madeira A.M.B.N."/>
            <person name="Martinez-Rossi N.M."/>
            <person name="Martins E.C."/>
            <person name="Meidanis J."/>
            <person name="Menck C.F.M."/>
            <person name="Miyaki C.Y."/>
            <person name="Moon D.H."/>
            <person name="Moreira L.M."/>
            <person name="Novo M.T.M."/>
            <person name="Okura V.K."/>
            <person name="Oliveira M.C."/>
            <person name="Oliveira V.R."/>
            <person name="Pereira H.A."/>
            <person name="Rossi A."/>
            <person name="Sena J.A.D."/>
            <person name="Silva C."/>
            <person name="de Souza R.F."/>
            <person name="Spinola L.A.F."/>
            <person name="Takita M.A."/>
            <person name="Tamura R.E."/>
            <person name="Teixeira E.C."/>
            <person name="Tezza R.I.D."/>
            <person name="Trindade dos Santos M."/>
            <person name="Truffi D."/>
            <person name="Tsai S.M."/>
            <person name="White F.F."/>
            <person name="Setubal J.C."/>
            <person name="Kitajima J.P."/>
        </authorList>
    </citation>
    <scope>NUCLEOTIDE SEQUENCE [LARGE SCALE GENOMIC DNA]</scope>
    <source>
        <strain>ATCC 33913 / DSM 3586 / NCPPB 528 / LMG 568 / P 25</strain>
    </source>
</reference>
<reference key="2">
    <citation type="journal article" date="2012" name="Environ. Microbiol. Rep.">
        <title>Microbial urate catabolism: characterization of HpyO, a non-homologous isofunctional isoform of the flavoprotein urate hydroxylase HpxO.</title>
        <authorList>
            <person name="Michiel M."/>
            <person name="Perchat N."/>
            <person name="Perret A."/>
            <person name="Tricot S."/>
            <person name="Papeil A."/>
            <person name="Besnard M."/>
            <person name="de Berardinis V."/>
            <person name="Salanoubat M."/>
            <person name="Fischer C."/>
        </authorList>
    </citation>
    <scope>FUNCTION</scope>
    <scope>CATALYTIC ACTIVITY</scope>
    <scope>BIOPHYSICOCHEMICAL PROPERTIES</scope>
    <scope>SUBSTRATE SPECIFICITY</scope>
    <scope>COFACTOR</scope>
    <scope>SUBUNIT</scope>
    <scope>PATHWAY</scope>
</reference>
<protein>
    <recommendedName>
        <fullName evidence="3">FAD-dependent urate hydroxylase</fullName>
        <ecNumber evidence="1">1.14.13.-</ecNumber>
        <ecNumber evidence="1">1.14.13.113</ecNumber>
    </recommendedName>
    <alternativeName>
        <fullName evidence="2">Flavoprotein urate hydroxylase</fullName>
    </alternativeName>
</protein>
<sequence>MSLAQLEHALQHDLQRLAHGGEPWVRPRVHPAGHVYDVVIVGAGQSGLGAAFALQRERVHNVLVIDENPPGQEGPWVTYARMQTLRTPKQITSIDLGVPTLTFRAWWEAQHGAAGWDALDKIPRGTWMDYLRWYRAALRLPVRNATQLVRIEPDAAPGIHRLHLAMGAPLMARKIILATGIQGGGQWQVPEWITQALPAQRYAHTSGPIDYAALAGKRVGILGGGASAFDNACFALDQGVARAEVFVRRAALPRVNPIRHMEQAGIIPRFAALPDADKYRMMASFFGRNQPPTNDTFQRACAHAGFALHLDAPWLGVEEHNDVVVVRTPQGEHRFDFLAIATGLVTDPRLRPELAALSGRIACWADRYQAPPGQANPVLDAHPYLGPGFELLPRTPDDAAAVDGLFAFNYSALINHGLSAAALSGLKVALPRLARAVADQLFLDDRQAMVEAYLGYDQAEFVGQWPQPTQAVA</sequence>
<organism>
    <name type="scientific">Xanthomonas campestris pv. campestris (strain ATCC 33913 / DSM 3586 / NCPPB 528 / LMG 568 / P 25)</name>
    <dbReference type="NCBI Taxonomy" id="190485"/>
    <lineage>
        <taxon>Bacteria</taxon>
        <taxon>Pseudomonadati</taxon>
        <taxon>Pseudomonadota</taxon>
        <taxon>Gammaproteobacteria</taxon>
        <taxon>Lysobacterales</taxon>
        <taxon>Lysobacteraceae</taxon>
        <taxon>Xanthomonas</taxon>
    </lineage>
</organism>
<accession>Q8PDQ6</accession>
<feature type="chain" id="PRO_0000435888" description="FAD-dependent urate hydroxylase">
    <location>
        <begin position="1"/>
        <end position="473"/>
    </location>
</feature>
<comment type="function">
    <text evidence="1">Catalyzes the hydroxylation of urate to 5-hydroxyisourate (HIU). Is likely to be involved in the urate degradation pathway to allantoin. Is slightly more efficient (about 2.6 times) with NADPH than NADH as the electron donor.</text>
</comment>
<comment type="catalytic activity">
    <reaction evidence="1">
        <text>urate + NADH + O2 + H(+) = 5-hydroxyisourate + NAD(+) + H2O</text>
        <dbReference type="Rhea" id="RHEA:27329"/>
        <dbReference type="ChEBI" id="CHEBI:15377"/>
        <dbReference type="ChEBI" id="CHEBI:15378"/>
        <dbReference type="ChEBI" id="CHEBI:15379"/>
        <dbReference type="ChEBI" id="CHEBI:17775"/>
        <dbReference type="ChEBI" id="CHEBI:18072"/>
        <dbReference type="ChEBI" id="CHEBI:57540"/>
        <dbReference type="ChEBI" id="CHEBI:57945"/>
        <dbReference type="EC" id="1.14.13.113"/>
    </reaction>
</comment>
<comment type="catalytic activity">
    <reaction evidence="1">
        <text>urate + NADPH + O2 + H(+) = 5-hydroxyisourate + NADP(+) + H2O</text>
        <dbReference type="Rhea" id="RHEA:51532"/>
        <dbReference type="ChEBI" id="CHEBI:15377"/>
        <dbReference type="ChEBI" id="CHEBI:15378"/>
        <dbReference type="ChEBI" id="CHEBI:15379"/>
        <dbReference type="ChEBI" id="CHEBI:17775"/>
        <dbReference type="ChEBI" id="CHEBI:18072"/>
        <dbReference type="ChEBI" id="CHEBI:57783"/>
        <dbReference type="ChEBI" id="CHEBI:58349"/>
    </reaction>
</comment>
<comment type="cofactor">
    <cofactor evidence="1">
        <name>FAD</name>
        <dbReference type="ChEBI" id="CHEBI:57692"/>
    </cofactor>
    <text evidence="1">FAD cannot be replaced by FMN or riboflavin.</text>
</comment>
<comment type="biophysicochemical properties">
    <kinetics>
        <KM evidence="1">29 uM for urate</KM>
        <KM evidence="1">24 uM for NADH</KM>
        <KM evidence="1">55 uM for NADPH</KM>
        <text evidence="1">kcat is 1.06 sec(-1) for the NADPH-dependent oxidation of urate.</text>
    </kinetics>
</comment>
<comment type="pathway">
    <text evidence="3">Purine metabolism; urate degradation.</text>
</comment>
<comment type="subunit">
    <text evidence="1">Homodimer.</text>
</comment>
<comment type="similarity">
    <text evidence="3">Belongs to the HpyO family.</text>
</comment>
<keyword id="KW-0274">FAD</keyword>
<keyword id="KW-0285">Flavoprotein</keyword>
<keyword id="KW-0503">Monooxygenase</keyword>
<keyword id="KW-0520">NAD</keyword>
<keyword id="KW-0521">NADP</keyword>
<keyword id="KW-0560">Oxidoreductase</keyword>
<keyword id="KW-0659">Purine metabolism</keyword>
<keyword id="KW-1185">Reference proteome</keyword>
<evidence type="ECO:0000269" key="1">
    <source>
    </source>
</evidence>
<evidence type="ECO:0000303" key="2">
    <source>
    </source>
</evidence>
<evidence type="ECO:0000305" key="3">
    <source>
    </source>
</evidence>
<evidence type="ECO:0000312" key="4">
    <source>
        <dbReference type="EMBL" id="AAM39598.1"/>
    </source>
</evidence>